<name>SIGG_MYCTU</name>
<protein>
    <recommendedName>
        <fullName>ECF RNA polymerase sigma factor SigG</fullName>
        <shortName>ECF sigma factor SigG</shortName>
    </recommendedName>
    <alternativeName>
        <fullName>Alternative RNA polymerase sigma factor SigG</fullName>
    </alternativeName>
    <alternativeName>
        <fullName>RNA polymerase sigma-G factor</fullName>
        <shortName>Sigma-g factor</shortName>
    </alternativeName>
</protein>
<gene>
    <name type="primary">sigG</name>
    <name type="ordered locus">Rv0182c</name>
</gene>
<comment type="function">
    <text evidence="4 5">Sigma factors are initiation factors that promote the attachment of RNA polymerase to specific initiation sites and are then released. Extracytoplasmic function (ECF) sigma factors are held in an inactive form by a cognate anti-sigma factor until released, although no anti-sigma factor is known for this protein. May be involved in host intracellular survival after infection (strains H37Rv and CDC 1551). A role in the SOS response is controversial; it has been seen in strain CDC 1551 (PubMed:18039768) but not in H37Rv (PubMed:21169493).</text>
</comment>
<comment type="subunit">
    <text evidence="6">Interacts transiently with the RNA polymerase catalytic core formed by RpoA, RpoB, RpoC and RpoZ (2 alpha, 1 beta, 1 beta' and 1 omega subunit) to form the RNA polymerase holoenzyme that can initiate transcription.</text>
</comment>
<comment type="induction">
    <text evidence="3 4 5">Very poorly expressed in exponential phase; further repressed at room temperature. Up-regulated 10-fold 7 days after infection of human macrophages. Induced by DNA-damaging agents but not by surface stress (detergent).</text>
</comment>
<comment type="domain">
    <text evidence="1">The sigma-70 factor domain-2 mediates sequence-specific interaction with the -10 element in promoter DNA, and plays an important role in melting the double-stranded DNA and the formation of the transcription bubble. The sigma-70 factor domain 2 mediates interaction with the RNA polymerase subunits RpoB and RpoC (By similarity).</text>
</comment>
<comment type="domain">
    <text evidence="1">The sigma-70 factor domain-4 contains a helix-turn-helix (H-T-H) motif that mediates interaction with the -35 element in promoter DNA. The domain also mediates interaction with the RNA polymerase subunit RpoA (By similarity).</text>
</comment>
<comment type="disruption phenotype">
    <text evidence="5">Not essential, no effect on the SOS response genes, no change in resistance to DNA-damaging agents including mitomycin C.</text>
</comment>
<comment type="similarity">
    <text evidence="6">Belongs to the sigma-70 factor family. ECF subfamily.</text>
</comment>
<dbReference type="EMBL" id="AL123456">
    <property type="protein sequence ID" value="CCP42908.1"/>
    <property type="molecule type" value="Genomic_DNA"/>
</dbReference>
<dbReference type="PIR" id="A70906">
    <property type="entry name" value="A70906"/>
</dbReference>
<dbReference type="RefSeq" id="NP_214696.1">
    <property type="nucleotide sequence ID" value="NC_000962.3"/>
</dbReference>
<dbReference type="RefSeq" id="WP_003401110.1">
    <property type="nucleotide sequence ID" value="NZ_NVQJ01000001.1"/>
</dbReference>
<dbReference type="SMR" id="P9WGG5"/>
<dbReference type="STRING" id="83332.Rv0182c"/>
<dbReference type="PaxDb" id="83332-Rv0182c"/>
<dbReference type="DNASU" id="886786"/>
<dbReference type="GeneID" id="886786"/>
<dbReference type="KEGG" id="mtu:Rv0182c"/>
<dbReference type="KEGG" id="mtv:RVBD_0182c"/>
<dbReference type="PATRIC" id="fig|83332.111.peg.209"/>
<dbReference type="TubercuList" id="Rv0182c"/>
<dbReference type="eggNOG" id="COG1595">
    <property type="taxonomic scope" value="Bacteria"/>
</dbReference>
<dbReference type="eggNOG" id="COG3631">
    <property type="taxonomic scope" value="Bacteria"/>
</dbReference>
<dbReference type="InParanoid" id="P9WGG5"/>
<dbReference type="OrthoDB" id="7376212at2"/>
<dbReference type="PhylomeDB" id="P9WGG5"/>
<dbReference type="Proteomes" id="UP000001584">
    <property type="component" value="Chromosome"/>
</dbReference>
<dbReference type="GO" id="GO:0005886">
    <property type="term" value="C:plasma membrane"/>
    <property type="evidence" value="ECO:0007005"/>
    <property type="project" value="MTBBASE"/>
</dbReference>
<dbReference type="GO" id="GO:0003677">
    <property type="term" value="F:DNA binding"/>
    <property type="evidence" value="ECO:0007669"/>
    <property type="project" value="UniProtKB-KW"/>
</dbReference>
<dbReference type="GO" id="GO:0016987">
    <property type="term" value="F:sigma factor activity"/>
    <property type="evidence" value="ECO:0000318"/>
    <property type="project" value="GO_Central"/>
</dbReference>
<dbReference type="GO" id="GO:0006352">
    <property type="term" value="P:DNA-templated transcription initiation"/>
    <property type="evidence" value="ECO:0007669"/>
    <property type="project" value="InterPro"/>
</dbReference>
<dbReference type="GO" id="GO:0006355">
    <property type="term" value="P:regulation of DNA-templated transcription"/>
    <property type="evidence" value="ECO:0000318"/>
    <property type="project" value="GO_Central"/>
</dbReference>
<dbReference type="GO" id="GO:0001666">
    <property type="term" value="P:response to hypoxia"/>
    <property type="evidence" value="ECO:0000270"/>
    <property type="project" value="MTBBASE"/>
</dbReference>
<dbReference type="GO" id="GO:0009415">
    <property type="term" value="P:response to water"/>
    <property type="evidence" value="ECO:0000270"/>
    <property type="project" value="MTBBASE"/>
</dbReference>
<dbReference type="CDD" id="cd06171">
    <property type="entry name" value="Sigma70_r4"/>
    <property type="match status" value="1"/>
</dbReference>
<dbReference type="FunFam" id="1.10.10.10:FF:000959">
    <property type="entry name" value="RNA polymerase sigma factor"/>
    <property type="match status" value="1"/>
</dbReference>
<dbReference type="Gene3D" id="1.10.1740.10">
    <property type="match status" value="1"/>
</dbReference>
<dbReference type="Gene3D" id="3.10.450.50">
    <property type="match status" value="1"/>
</dbReference>
<dbReference type="Gene3D" id="1.10.10.10">
    <property type="entry name" value="Winged helix-like DNA-binding domain superfamily/Winged helix DNA-binding domain"/>
    <property type="match status" value="1"/>
</dbReference>
<dbReference type="InterPro" id="IPR032710">
    <property type="entry name" value="NTF2-like_dom_sf"/>
</dbReference>
<dbReference type="InterPro" id="IPR039425">
    <property type="entry name" value="RNA_pol_sigma-70-like"/>
</dbReference>
<dbReference type="InterPro" id="IPR014284">
    <property type="entry name" value="RNA_pol_sigma-70_dom"/>
</dbReference>
<dbReference type="InterPro" id="IPR014305">
    <property type="entry name" value="RNA_pol_sigma-G_actinobac"/>
</dbReference>
<dbReference type="InterPro" id="IPR000838">
    <property type="entry name" value="RNA_pol_sigma70_ECF_CS"/>
</dbReference>
<dbReference type="InterPro" id="IPR007627">
    <property type="entry name" value="RNA_pol_sigma70_r2"/>
</dbReference>
<dbReference type="InterPro" id="IPR013249">
    <property type="entry name" value="RNA_pol_sigma70_r4_t2"/>
</dbReference>
<dbReference type="InterPro" id="IPR013325">
    <property type="entry name" value="RNA_pol_sigma_r2"/>
</dbReference>
<dbReference type="InterPro" id="IPR013324">
    <property type="entry name" value="RNA_pol_sigma_r3/r4-like"/>
</dbReference>
<dbReference type="InterPro" id="IPR037401">
    <property type="entry name" value="SnoaL-like"/>
</dbReference>
<dbReference type="InterPro" id="IPR036388">
    <property type="entry name" value="WH-like_DNA-bd_sf"/>
</dbReference>
<dbReference type="NCBIfam" id="NF006089">
    <property type="entry name" value="PRK08241.1"/>
    <property type="match status" value="1"/>
</dbReference>
<dbReference type="NCBIfam" id="TIGR02937">
    <property type="entry name" value="sigma70-ECF"/>
    <property type="match status" value="1"/>
</dbReference>
<dbReference type="NCBIfam" id="TIGR02960">
    <property type="entry name" value="SigX5"/>
    <property type="match status" value="1"/>
</dbReference>
<dbReference type="PANTHER" id="PTHR43133:SF65">
    <property type="entry name" value="ECF RNA POLYMERASE SIGMA FACTOR SIGG"/>
    <property type="match status" value="1"/>
</dbReference>
<dbReference type="PANTHER" id="PTHR43133">
    <property type="entry name" value="RNA POLYMERASE ECF-TYPE SIGMA FACTO"/>
    <property type="match status" value="1"/>
</dbReference>
<dbReference type="Pfam" id="PF04542">
    <property type="entry name" value="Sigma70_r2"/>
    <property type="match status" value="1"/>
</dbReference>
<dbReference type="Pfam" id="PF08281">
    <property type="entry name" value="Sigma70_r4_2"/>
    <property type="match status" value="1"/>
</dbReference>
<dbReference type="Pfam" id="PF12680">
    <property type="entry name" value="SnoaL_2"/>
    <property type="match status" value="1"/>
</dbReference>
<dbReference type="SUPFAM" id="SSF54427">
    <property type="entry name" value="NTF2-like"/>
    <property type="match status" value="1"/>
</dbReference>
<dbReference type="SUPFAM" id="SSF88946">
    <property type="entry name" value="Sigma2 domain of RNA polymerase sigma factors"/>
    <property type="match status" value="1"/>
</dbReference>
<dbReference type="SUPFAM" id="SSF88659">
    <property type="entry name" value="Sigma3 and sigma4 domains of RNA polymerase sigma factors"/>
    <property type="match status" value="1"/>
</dbReference>
<dbReference type="PROSITE" id="PS01063">
    <property type="entry name" value="SIGMA70_ECF"/>
    <property type="match status" value="1"/>
</dbReference>
<keyword id="KW-0238">DNA-binding</keyword>
<keyword id="KW-1185">Reference proteome</keyword>
<keyword id="KW-0731">Sigma factor</keyword>
<keyword id="KW-0804">Transcription</keyword>
<keyword id="KW-0805">Transcription regulation</keyword>
<proteinExistence type="evidence at protein level"/>
<organism>
    <name type="scientific">Mycobacterium tuberculosis (strain ATCC 25618 / H37Rv)</name>
    <dbReference type="NCBI Taxonomy" id="83332"/>
    <lineage>
        <taxon>Bacteria</taxon>
        <taxon>Bacillati</taxon>
        <taxon>Actinomycetota</taxon>
        <taxon>Actinomycetes</taxon>
        <taxon>Mycobacteriales</taxon>
        <taxon>Mycobacteriaceae</taxon>
        <taxon>Mycobacterium</taxon>
        <taxon>Mycobacterium tuberculosis complex</taxon>
    </lineage>
</organism>
<feature type="chain" id="PRO_0000423098" description="ECF RNA polymerase sigma factor SigG">
    <location>
        <begin position="1"/>
        <end position="370"/>
    </location>
</feature>
<feature type="DNA-binding region" description="H-T-H motif" evidence="1">
    <location>
        <begin position="207"/>
        <end position="226"/>
    </location>
</feature>
<feature type="region of interest" description="Sigma-70 factor domain-2">
    <location>
        <begin position="63"/>
        <end position="129"/>
    </location>
</feature>
<feature type="region of interest" description="Sigma-70 factor domain-4">
    <location>
        <begin position="180"/>
        <end position="232"/>
    </location>
</feature>
<feature type="short sequence motif" description="Polymerase core binding" evidence="2">
    <location>
        <begin position="85"/>
        <end position="88"/>
    </location>
</feature>
<accession>P9WGG5</accession>
<accession>L7N5U5</accession>
<evidence type="ECO:0000250" key="1"/>
<evidence type="ECO:0000255" key="2"/>
<evidence type="ECO:0000269" key="3">
    <source>
    </source>
</evidence>
<evidence type="ECO:0000269" key="4">
    <source>
    </source>
</evidence>
<evidence type="ECO:0000269" key="5">
    <source>
    </source>
</evidence>
<evidence type="ECO:0000305" key="6"/>
<reference key="1">
    <citation type="journal article" date="1998" name="Nature">
        <title>Deciphering the biology of Mycobacterium tuberculosis from the complete genome sequence.</title>
        <authorList>
            <person name="Cole S.T."/>
            <person name="Brosch R."/>
            <person name="Parkhill J."/>
            <person name="Garnier T."/>
            <person name="Churcher C.M."/>
            <person name="Harris D.E."/>
            <person name="Gordon S.V."/>
            <person name="Eiglmeier K."/>
            <person name="Gas S."/>
            <person name="Barry C.E. III"/>
            <person name="Tekaia F."/>
            <person name="Badcock K."/>
            <person name="Basham D."/>
            <person name="Brown D."/>
            <person name="Chillingworth T."/>
            <person name="Connor R."/>
            <person name="Davies R.M."/>
            <person name="Devlin K."/>
            <person name="Feltwell T."/>
            <person name="Gentles S."/>
            <person name="Hamlin N."/>
            <person name="Holroyd S."/>
            <person name="Hornsby T."/>
            <person name="Jagels K."/>
            <person name="Krogh A."/>
            <person name="McLean J."/>
            <person name="Moule S."/>
            <person name="Murphy L.D."/>
            <person name="Oliver S."/>
            <person name="Osborne J."/>
            <person name="Quail M.A."/>
            <person name="Rajandream M.A."/>
            <person name="Rogers J."/>
            <person name="Rutter S."/>
            <person name="Seeger K."/>
            <person name="Skelton S."/>
            <person name="Squares S."/>
            <person name="Squares R."/>
            <person name="Sulston J.E."/>
            <person name="Taylor K."/>
            <person name="Whitehead S."/>
            <person name="Barrell B.G."/>
        </authorList>
    </citation>
    <scope>NUCLEOTIDE SEQUENCE [LARGE SCALE GENOMIC DNA]</scope>
    <source>
        <strain>ATCC 25618 / H37Rv</strain>
    </source>
</reference>
<reference key="2">
    <citation type="journal article" date="1999" name="Mol. Microbiol.">
        <title>Differential expression of 10 sigma factor genes in Mycobacterium tuberculosis.</title>
        <authorList>
            <person name="Manganelli R."/>
            <person name="Dubnau E."/>
            <person name="Tyagi S."/>
            <person name="Kramer F.R."/>
            <person name="Smith I."/>
        </authorList>
    </citation>
    <scope>INDUCTION</scope>
    <source>
        <strain>ATCC 25618 / H37Rv</strain>
    </source>
</reference>
<reference key="3">
    <citation type="journal article" date="2006" name="Res. Microbiol.">
        <title>Profiling of Mycobacterium tuberculosis gene expression during human macrophage infection: upregulation of the alternative sigma factor G, a group of transcriptional regulators, and proteins with unknown function.</title>
        <authorList>
            <person name="Cappelli G."/>
            <person name="Volpe E."/>
            <person name="Grassi M."/>
            <person name="Liseo B."/>
            <person name="Colizzi V."/>
            <person name="Mariani F."/>
        </authorList>
    </citation>
    <scope>FUNCTION</scope>
    <scope>INDUCTION IN HUMAN MACROPHAGES</scope>
    <source>
        <strain>ATCC 25618 / H37Rv</strain>
    </source>
</reference>
<reference key="4">
    <citation type="journal article" date="2011" name="J. Bacteriol.">
        <title>SigG does not control gene expression in response to DNA damage in Mycobacterium tuberculosis H37Rv.</title>
        <authorList>
            <person name="Smollett K.L."/>
            <person name="Dawson L.F."/>
            <person name="Davis E.O."/>
        </authorList>
    </citation>
    <scope>FUNCTION</scope>
    <scope>INDUCTION BY DNA DAMAGE</scope>
    <scope>DISRUPTION PHENOTYPE</scope>
    <source>
        <strain>ATCC 25618 / H37Rv</strain>
    </source>
</reference>
<reference key="5">
    <citation type="journal article" date="2011" name="Mol. Cell. Proteomics">
        <title>Proteogenomic analysis of Mycobacterium tuberculosis by high resolution mass spectrometry.</title>
        <authorList>
            <person name="Kelkar D.S."/>
            <person name="Kumar D."/>
            <person name="Kumar P."/>
            <person name="Balakrishnan L."/>
            <person name="Muthusamy B."/>
            <person name="Yadav A.K."/>
            <person name="Shrivastava P."/>
            <person name="Marimuthu A."/>
            <person name="Anand S."/>
            <person name="Sundaram H."/>
            <person name="Kingsbury R."/>
            <person name="Harsha H.C."/>
            <person name="Nair B."/>
            <person name="Prasad T.S."/>
            <person name="Chauhan D.S."/>
            <person name="Katoch K."/>
            <person name="Katoch V.M."/>
            <person name="Kumar P."/>
            <person name="Chaerkady R."/>
            <person name="Ramachandran S."/>
            <person name="Dash D."/>
            <person name="Pandey A."/>
        </authorList>
    </citation>
    <scope>IDENTIFICATION BY MASS SPECTROMETRY [LARGE SCALE ANALYSIS]</scope>
    <source>
        <strain>ATCC 25618 / H37Rv</strain>
    </source>
</reference>
<sequence length="370" mass="40983">MRTSPMPAKFRSVRVVVITGSVTAAPVRVSETLRRLIDVSVLAENSGREPADERRGDFSAHTEPYRRELLAHCYRMTGSLHDAEDLVQETLLRAWKAYEGFAGKSSLRTWLHRIATNTCLTALEGRRRRPLPTGLGRPSADPSGELVERREVSWLEPLPDVTDDPADPSTIVGNRESVRLAFVAALQHLSPRQRAVLLLRDVLQWKSAEVADAIGTSTVAVNSLLQRARSQLQTVRPSAADRLSAPDSPEAQDLLARYIAAFEAYDIDRLVELFTAEAIWEMPPYTGWYQGAQAIVTLIHQQCPAYSPGDMRLISLIANGQPAAAMYMRAGDVHLPFQLHVLDMAADRVSHVVAFLDTTLFPKFGLPDSL</sequence>